<feature type="chain" id="PRO_0000171926" description="Dual-specificity RNA methyltransferase RlmN">
    <location>
        <begin position="1"/>
        <end position="357"/>
    </location>
</feature>
<feature type="domain" description="Radical SAM core" evidence="2">
    <location>
        <begin position="109"/>
        <end position="340"/>
    </location>
</feature>
<feature type="active site" description="Proton acceptor" evidence="1">
    <location>
        <position position="89"/>
    </location>
</feature>
<feature type="active site" description="S-methylcysteine intermediate" evidence="1">
    <location>
        <position position="345"/>
    </location>
</feature>
<feature type="binding site" evidence="1">
    <location>
        <position position="123"/>
    </location>
    <ligand>
        <name>[4Fe-4S] cluster</name>
        <dbReference type="ChEBI" id="CHEBI:49883"/>
        <note>4Fe-4S-S-AdoMet</note>
    </ligand>
</feature>
<feature type="binding site" evidence="1">
    <location>
        <position position="127"/>
    </location>
    <ligand>
        <name>[4Fe-4S] cluster</name>
        <dbReference type="ChEBI" id="CHEBI:49883"/>
        <note>4Fe-4S-S-AdoMet</note>
    </ligand>
</feature>
<feature type="binding site" evidence="1">
    <location>
        <position position="130"/>
    </location>
    <ligand>
        <name>[4Fe-4S] cluster</name>
        <dbReference type="ChEBI" id="CHEBI:49883"/>
        <note>4Fe-4S-S-AdoMet</note>
    </ligand>
</feature>
<feature type="binding site" evidence="1">
    <location>
        <begin position="173"/>
        <end position="174"/>
    </location>
    <ligand>
        <name>S-adenosyl-L-methionine</name>
        <dbReference type="ChEBI" id="CHEBI:59789"/>
    </ligand>
</feature>
<feature type="binding site" evidence="1">
    <location>
        <position position="203"/>
    </location>
    <ligand>
        <name>S-adenosyl-L-methionine</name>
        <dbReference type="ChEBI" id="CHEBI:59789"/>
    </ligand>
</feature>
<feature type="binding site" evidence="1">
    <location>
        <begin position="226"/>
        <end position="228"/>
    </location>
    <ligand>
        <name>S-adenosyl-L-methionine</name>
        <dbReference type="ChEBI" id="CHEBI:59789"/>
    </ligand>
</feature>
<feature type="binding site" evidence="1">
    <location>
        <position position="302"/>
    </location>
    <ligand>
        <name>S-adenosyl-L-methionine</name>
        <dbReference type="ChEBI" id="CHEBI:59789"/>
    </ligand>
</feature>
<feature type="disulfide bond" description="(transient)" evidence="1">
    <location>
        <begin position="116"/>
        <end position="345"/>
    </location>
</feature>
<reference key="1">
    <citation type="journal article" date="1999" name="Nature">
        <title>Genomic sequence comparison of two unrelated isolates of the human gastric pathogen Helicobacter pylori.</title>
        <authorList>
            <person name="Alm R.A."/>
            <person name="Ling L.-S.L."/>
            <person name="Moir D.T."/>
            <person name="King B.L."/>
            <person name="Brown E.D."/>
            <person name="Doig P.C."/>
            <person name="Smith D.R."/>
            <person name="Noonan B."/>
            <person name="Guild B.C."/>
            <person name="deJonge B.L."/>
            <person name="Carmel G."/>
            <person name="Tummino P.J."/>
            <person name="Caruso A."/>
            <person name="Uria-Nickelsen M."/>
            <person name="Mills D.M."/>
            <person name="Ives C."/>
            <person name="Gibson R."/>
            <person name="Merberg D."/>
            <person name="Mills S.D."/>
            <person name="Jiang Q."/>
            <person name="Taylor D.E."/>
            <person name="Vovis G.F."/>
            <person name="Trust T.J."/>
        </authorList>
    </citation>
    <scope>NUCLEOTIDE SEQUENCE [LARGE SCALE GENOMIC DNA]</scope>
    <source>
        <strain>J99 / ATCC 700824</strain>
    </source>
</reference>
<protein>
    <recommendedName>
        <fullName evidence="1">Dual-specificity RNA methyltransferase RlmN</fullName>
        <ecNumber evidence="1">2.1.1.192</ecNumber>
    </recommendedName>
    <alternativeName>
        <fullName evidence="1">23S rRNA (adenine(2503)-C(2))-methyltransferase</fullName>
    </alternativeName>
    <alternativeName>
        <fullName evidence="1">23S rRNA m2A2503 methyltransferase</fullName>
    </alternativeName>
    <alternativeName>
        <fullName evidence="1">Ribosomal RNA large subunit methyltransferase N</fullName>
    </alternativeName>
    <alternativeName>
        <fullName evidence="1">tRNA (adenine(37)-C(2))-methyltransferase</fullName>
    </alternativeName>
    <alternativeName>
        <fullName evidence="1">tRNA m2A37 methyltransferase</fullName>
    </alternativeName>
</protein>
<dbReference type="EC" id="2.1.1.192" evidence="1"/>
<dbReference type="EMBL" id="AE001439">
    <property type="protein sequence ID" value="AAD06899.1"/>
    <property type="molecule type" value="Genomic_DNA"/>
</dbReference>
<dbReference type="PIR" id="H71821">
    <property type="entry name" value="H71821"/>
</dbReference>
<dbReference type="RefSeq" id="WP_000647720.1">
    <property type="nucleotide sequence ID" value="NC_000921.1"/>
</dbReference>
<dbReference type="SMR" id="Q9ZJI4"/>
<dbReference type="KEGG" id="hpj:jhp_1325"/>
<dbReference type="PATRIC" id="fig|85963.30.peg.1235"/>
<dbReference type="eggNOG" id="COG0820">
    <property type="taxonomic scope" value="Bacteria"/>
</dbReference>
<dbReference type="Proteomes" id="UP000000804">
    <property type="component" value="Chromosome"/>
</dbReference>
<dbReference type="GO" id="GO:0005737">
    <property type="term" value="C:cytoplasm"/>
    <property type="evidence" value="ECO:0007669"/>
    <property type="project" value="UniProtKB-SubCell"/>
</dbReference>
<dbReference type="GO" id="GO:0051539">
    <property type="term" value="F:4 iron, 4 sulfur cluster binding"/>
    <property type="evidence" value="ECO:0007669"/>
    <property type="project" value="UniProtKB-UniRule"/>
</dbReference>
<dbReference type="GO" id="GO:0046872">
    <property type="term" value="F:metal ion binding"/>
    <property type="evidence" value="ECO:0007669"/>
    <property type="project" value="UniProtKB-KW"/>
</dbReference>
<dbReference type="GO" id="GO:0070040">
    <property type="term" value="F:rRNA (adenine(2503)-C2-)-methyltransferase activity"/>
    <property type="evidence" value="ECO:0007669"/>
    <property type="project" value="UniProtKB-UniRule"/>
</dbReference>
<dbReference type="GO" id="GO:0019843">
    <property type="term" value="F:rRNA binding"/>
    <property type="evidence" value="ECO:0007669"/>
    <property type="project" value="UniProtKB-UniRule"/>
</dbReference>
<dbReference type="GO" id="GO:0002935">
    <property type="term" value="F:tRNA (adenine(37)-C2)-methyltransferase activity"/>
    <property type="evidence" value="ECO:0007669"/>
    <property type="project" value="UniProtKB-UniRule"/>
</dbReference>
<dbReference type="GO" id="GO:0000049">
    <property type="term" value="F:tRNA binding"/>
    <property type="evidence" value="ECO:0007669"/>
    <property type="project" value="UniProtKB-UniRule"/>
</dbReference>
<dbReference type="GO" id="GO:0070475">
    <property type="term" value="P:rRNA base methylation"/>
    <property type="evidence" value="ECO:0007669"/>
    <property type="project" value="UniProtKB-UniRule"/>
</dbReference>
<dbReference type="GO" id="GO:0030488">
    <property type="term" value="P:tRNA methylation"/>
    <property type="evidence" value="ECO:0007669"/>
    <property type="project" value="UniProtKB-UniRule"/>
</dbReference>
<dbReference type="CDD" id="cd01335">
    <property type="entry name" value="Radical_SAM"/>
    <property type="match status" value="1"/>
</dbReference>
<dbReference type="FunFam" id="3.20.20.70:FF:000014">
    <property type="entry name" value="Probable dual-specificity RNA methyltransferase RlmN"/>
    <property type="match status" value="1"/>
</dbReference>
<dbReference type="Gene3D" id="1.10.150.530">
    <property type="match status" value="1"/>
</dbReference>
<dbReference type="Gene3D" id="3.20.20.70">
    <property type="entry name" value="Aldolase class I"/>
    <property type="match status" value="1"/>
</dbReference>
<dbReference type="HAMAP" id="MF_01849">
    <property type="entry name" value="RNA_methyltr_RlmN"/>
    <property type="match status" value="1"/>
</dbReference>
<dbReference type="InterPro" id="IPR013785">
    <property type="entry name" value="Aldolase_TIM"/>
</dbReference>
<dbReference type="InterPro" id="IPR040072">
    <property type="entry name" value="Methyltransferase_A"/>
</dbReference>
<dbReference type="InterPro" id="IPR048641">
    <property type="entry name" value="RlmN_N"/>
</dbReference>
<dbReference type="InterPro" id="IPR027492">
    <property type="entry name" value="RNA_MTrfase_RlmN"/>
</dbReference>
<dbReference type="InterPro" id="IPR004383">
    <property type="entry name" value="rRNA_lsu_MTrfase_RlmN/Cfr"/>
</dbReference>
<dbReference type="InterPro" id="IPR007197">
    <property type="entry name" value="rSAM"/>
</dbReference>
<dbReference type="NCBIfam" id="TIGR00048">
    <property type="entry name" value="rRNA_mod_RlmN"/>
    <property type="match status" value="1"/>
</dbReference>
<dbReference type="PANTHER" id="PTHR30544">
    <property type="entry name" value="23S RRNA METHYLTRANSFERASE"/>
    <property type="match status" value="1"/>
</dbReference>
<dbReference type="PANTHER" id="PTHR30544:SF5">
    <property type="entry name" value="RADICAL SAM CORE DOMAIN-CONTAINING PROTEIN"/>
    <property type="match status" value="1"/>
</dbReference>
<dbReference type="Pfam" id="PF04055">
    <property type="entry name" value="Radical_SAM"/>
    <property type="match status" value="1"/>
</dbReference>
<dbReference type="Pfam" id="PF21016">
    <property type="entry name" value="RlmN_N"/>
    <property type="match status" value="1"/>
</dbReference>
<dbReference type="PIRSF" id="PIRSF006004">
    <property type="entry name" value="CHP00048"/>
    <property type="match status" value="1"/>
</dbReference>
<dbReference type="SFLD" id="SFLDF00275">
    <property type="entry name" value="adenosine_C2_methyltransferase"/>
    <property type="match status" value="1"/>
</dbReference>
<dbReference type="SFLD" id="SFLDG01062">
    <property type="entry name" value="methyltransferase_(Class_A)"/>
    <property type="match status" value="1"/>
</dbReference>
<dbReference type="SUPFAM" id="SSF102114">
    <property type="entry name" value="Radical SAM enzymes"/>
    <property type="match status" value="1"/>
</dbReference>
<dbReference type="PROSITE" id="PS51918">
    <property type="entry name" value="RADICAL_SAM"/>
    <property type="match status" value="1"/>
</dbReference>
<gene>
    <name evidence="1" type="primary">rlmN</name>
    <name type="ordered locus">jhp_1325</name>
</gene>
<organism>
    <name type="scientific">Helicobacter pylori (strain J99 / ATCC 700824)</name>
    <name type="common">Campylobacter pylori J99</name>
    <dbReference type="NCBI Taxonomy" id="85963"/>
    <lineage>
        <taxon>Bacteria</taxon>
        <taxon>Pseudomonadati</taxon>
        <taxon>Campylobacterota</taxon>
        <taxon>Epsilonproteobacteria</taxon>
        <taxon>Campylobacterales</taxon>
        <taxon>Helicobacteraceae</taxon>
        <taxon>Helicobacter</taxon>
    </lineage>
</organism>
<name>RLMN_HELPJ</name>
<proteinExistence type="inferred from homology"/>
<sequence>MKASIYDFTLDELSQLLKPSFRAKQLYLWLYAKYKTSFKDMQNNFSKDFIAYLEQEFTLRTIEIAHVRESVDGSKKYLFKSLRDNHTFEAVLLKMKDKKIDEETNAVLEGEKYTVCVSCQIGCQVGCSFCFTQKGGFVRDLKASEIIQQALLIKEANNLPIEKALNIVFMGMGEPLNNLDEVCKAVEIFNTGMQISPKRITISTSGVADKIPILAGKNLGVQLAISLHAVDDKTRSSLMPLNKKYNIECVLNEVRKWPLEQRKRVMFEYLLIKDLNDSLDCAKKLLKLLNGIKSKVNLILFNPHEGSKFERPSLESARMFADFLNAKGLLCTIRESKALDIEAACGQLREKKLQQKI</sequence>
<evidence type="ECO:0000255" key="1">
    <source>
        <dbReference type="HAMAP-Rule" id="MF_01849"/>
    </source>
</evidence>
<evidence type="ECO:0000255" key="2">
    <source>
        <dbReference type="PROSITE-ProRule" id="PRU01266"/>
    </source>
</evidence>
<accession>Q9ZJI4</accession>
<comment type="function">
    <text evidence="1">Specifically methylates position 2 of adenine 2503 in 23S rRNA and position 2 of adenine 37 in tRNAs. m2A2503 modification seems to play a crucial role in the proofreading step occurring at the peptidyl transferase center and thus would serve to optimize ribosomal fidelity.</text>
</comment>
<comment type="catalytic activity">
    <reaction evidence="1">
        <text>adenosine(2503) in 23S rRNA + 2 reduced [2Fe-2S]-[ferredoxin] + 2 S-adenosyl-L-methionine = 2-methyladenosine(2503) in 23S rRNA + 5'-deoxyadenosine + L-methionine + 2 oxidized [2Fe-2S]-[ferredoxin] + S-adenosyl-L-homocysteine</text>
        <dbReference type="Rhea" id="RHEA:42916"/>
        <dbReference type="Rhea" id="RHEA-COMP:10000"/>
        <dbReference type="Rhea" id="RHEA-COMP:10001"/>
        <dbReference type="Rhea" id="RHEA-COMP:10152"/>
        <dbReference type="Rhea" id="RHEA-COMP:10282"/>
        <dbReference type="ChEBI" id="CHEBI:17319"/>
        <dbReference type="ChEBI" id="CHEBI:33737"/>
        <dbReference type="ChEBI" id="CHEBI:33738"/>
        <dbReference type="ChEBI" id="CHEBI:57844"/>
        <dbReference type="ChEBI" id="CHEBI:57856"/>
        <dbReference type="ChEBI" id="CHEBI:59789"/>
        <dbReference type="ChEBI" id="CHEBI:74411"/>
        <dbReference type="ChEBI" id="CHEBI:74497"/>
        <dbReference type="EC" id="2.1.1.192"/>
    </reaction>
</comment>
<comment type="catalytic activity">
    <reaction evidence="1">
        <text>adenosine(37) in tRNA + 2 reduced [2Fe-2S]-[ferredoxin] + 2 S-adenosyl-L-methionine = 2-methyladenosine(37) in tRNA + 5'-deoxyadenosine + L-methionine + 2 oxidized [2Fe-2S]-[ferredoxin] + S-adenosyl-L-homocysteine</text>
        <dbReference type="Rhea" id="RHEA:43332"/>
        <dbReference type="Rhea" id="RHEA-COMP:10000"/>
        <dbReference type="Rhea" id="RHEA-COMP:10001"/>
        <dbReference type="Rhea" id="RHEA-COMP:10162"/>
        <dbReference type="Rhea" id="RHEA-COMP:10485"/>
        <dbReference type="ChEBI" id="CHEBI:17319"/>
        <dbReference type="ChEBI" id="CHEBI:33737"/>
        <dbReference type="ChEBI" id="CHEBI:33738"/>
        <dbReference type="ChEBI" id="CHEBI:57844"/>
        <dbReference type="ChEBI" id="CHEBI:57856"/>
        <dbReference type="ChEBI" id="CHEBI:59789"/>
        <dbReference type="ChEBI" id="CHEBI:74411"/>
        <dbReference type="ChEBI" id="CHEBI:74497"/>
        <dbReference type="EC" id="2.1.1.192"/>
    </reaction>
</comment>
<comment type="cofactor">
    <cofactor evidence="1">
        <name>[4Fe-4S] cluster</name>
        <dbReference type="ChEBI" id="CHEBI:49883"/>
    </cofactor>
    <text evidence="1">Binds 1 [4Fe-4S] cluster. The cluster is coordinated with 3 cysteines and an exchangeable S-adenosyl-L-methionine.</text>
</comment>
<comment type="subcellular location">
    <subcellularLocation>
        <location evidence="1">Cytoplasm</location>
    </subcellularLocation>
</comment>
<comment type="miscellaneous">
    <text evidence="1">Reaction proceeds by a ping-pong mechanism involving intermediate methylation of a conserved cysteine residue.</text>
</comment>
<comment type="similarity">
    <text evidence="1">Belongs to the radical SAM superfamily. RlmN family.</text>
</comment>
<keyword id="KW-0004">4Fe-4S</keyword>
<keyword id="KW-0963">Cytoplasm</keyword>
<keyword id="KW-1015">Disulfide bond</keyword>
<keyword id="KW-0408">Iron</keyword>
<keyword id="KW-0411">Iron-sulfur</keyword>
<keyword id="KW-0479">Metal-binding</keyword>
<keyword id="KW-0489">Methyltransferase</keyword>
<keyword id="KW-0698">rRNA processing</keyword>
<keyword id="KW-0949">S-adenosyl-L-methionine</keyword>
<keyword id="KW-0808">Transferase</keyword>
<keyword id="KW-0819">tRNA processing</keyword>